<sequence>MKKVTAMLFSMAVGLNAVSMAAKAKASEEQETDVLLIGGGIMSATLGTYLRELEPEWSMTMVERLEGVAQESSNGWNNAGTGHSALMELNYTPQNADGSISIEKAVAINEAFQISRQFWAHQVERGVLRTPRSFINTVPHMSFVWGEDNVNFLRARYAALQQSSLFRGMRYSEDHAQIKEWAPLVMEGRDPQQKVAATRTEIGTDVNYGEITRQLIASLQKKSNFSLQLSSEVRALKRNDDNTWTVTVADLKNGTAQNIRAKFVFIGAGGAALKLLQESGIPEAKDYAGFPVGGQFLVSENPDVVNHHLAKVYGKASVGAPPMSVPHIDTRVLDGKRVVLFGPFATFSTKFLKNGSLWDLMSSTTTSNVMPMMHVGLDNFDLVKYLVSQVMLSEEDRFEALKEYYPQAKKEDWRLWQAGQRVQIIKRDAEKGGVLRLGTEVVSDQQGTIAALLGASPGASTAAPIMLDLLEKVFGDRVSSPQWQATLKAIVPSYGRKLNGDVAATERELQYTSEVLGLKYDKPQAADSTPKPQFKPQPVQKEVADIAL</sequence>
<accession>B6I1A8</accession>
<gene>
    <name evidence="1" type="primary">mqo</name>
    <name type="ordered locus">ECSE_2478</name>
</gene>
<comment type="catalytic activity">
    <reaction evidence="1">
        <text>(S)-malate + a quinone = a quinol + oxaloacetate</text>
        <dbReference type="Rhea" id="RHEA:46012"/>
        <dbReference type="ChEBI" id="CHEBI:15589"/>
        <dbReference type="ChEBI" id="CHEBI:16452"/>
        <dbReference type="ChEBI" id="CHEBI:24646"/>
        <dbReference type="ChEBI" id="CHEBI:132124"/>
        <dbReference type="EC" id="1.1.5.4"/>
    </reaction>
</comment>
<comment type="cofactor">
    <cofactor evidence="1">
        <name>FAD</name>
        <dbReference type="ChEBI" id="CHEBI:57692"/>
    </cofactor>
</comment>
<comment type="pathway">
    <text evidence="1">Carbohydrate metabolism; tricarboxylic acid cycle; oxaloacetate from (S)-malate (quinone route): step 1/1.</text>
</comment>
<comment type="similarity">
    <text evidence="1">Belongs to the MQO family.</text>
</comment>
<name>MQO_ECOSE</name>
<dbReference type="EC" id="1.1.5.4" evidence="1"/>
<dbReference type="EMBL" id="AP009240">
    <property type="protein sequence ID" value="BAG78002.1"/>
    <property type="molecule type" value="Genomic_DNA"/>
</dbReference>
<dbReference type="RefSeq" id="WP_000758072.1">
    <property type="nucleotide sequence ID" value="NC_011415.1"/>
</dbReference>
<dbReference type="SMR" id="B6I1A8"/>
<dbReference type="KEGG" id="ecy:ECSE_2478"/>
<dbReference type="HOGENOM" id="CLU_028151_0_0_6"/>
<dbReference type="UniPathway" id="UPA00223">
    <property type="reaction ID" value="UER01008"/>
</dbReference>
<dbReference type="Proteomes" id="UP000008199">
    <property type="component" value="Chromosome"/>
</dbReference>
<dbReference type="GO" id="GO:0047545">
    <property type="term" value="F:2-hydroxyglutarate dehydrogenase activity"/>
    <property type="evidence" value="ECO:0007669"/>
    <property type="project" value="TreeGrafter"/>
</dbReference>
<dbReference type="GO" id="GO:0008924">
    <property type="term" value="F:L-malate dehydrogenase (quinone) activity"/>
    <property type="evidence" value="ECO:0007669"/>
    <property type="project" value="UniProtKB-UniRule"/>
</dbReference>
<dbReference type="GO" id="GO:0006099">
    <property type="term" value="P:tricarboxylic acid cycle"/>
    <property type="evidence" value="ECO:0007669"/>
    <property type="project" value="UniProtKB-UniRule"/>
</dbReference>
<dbReference type="Gene3D" id="3.30.9.10">
    <property type="entry name" value="D-Amino Acid Oxidase, subunit A, domain 2"/>
    <property type="match status" value="1"/>
</dbReference>
<dbReference type="Gene3D" id="3.50.50.60">
    <property type="entry name" value="FAD/NAD(P)-binding domain"/>
    <property type="match status" value="1"/>
</dbReference>
<dbReference type="HAMAP" id="MF_00212">
    <property type="entry name" value="MQO"/>
    <property type="match status" value="1"/>
</dbReference>
<dbReference type="InterPro" id="IPR036188">
    <property type="entry name" value="FAD/NAD-bd_sf"/>
</dbReference>
<dbReference type="InterPro" id="IPR006231">
    <property type="entry name" value="MQO"/>
</dbReference>
<dbReference type="NCBIfam" id="TIGR01320">
    <property type="entry name" value="mal_quin_oxido"/>
    <property type="match status" value="1"/>
</dbReference>
<dbReference type="NCBIfam" id="NF003603">
    <property type="entry name" value="PRK05257.1-1"/>
    <property type="match status" value="1"/>
</dbReference>
<dbReference type="NCBIfam" id="NF003605">
    <property type="entry name" value="PRK05257.1-4"/>
    <property type="match status" value="1"/>
</dbReference>
<dbReference type="NCBIfam" id="NF003606">
    <property type="entry name" value="PRK05257.2-1"/>
    <property type="match status" value="1"/>
</dbReference>
<dbReference type="NCBIfam" id="NF003608">
    <property type="entry name" value="PRK05257.2-4"/>
    <property type="match status" value="1"/>
</dbReference>
<dbReference type="NCBIfam" id="NF003611">
    <property type="entry name" value="PRK05257.3-2"/>
    <property type="match status" value="1"/>
</dbReference>
<dbReference type="NCBIfam" id="NF009875">
    <property type="entry name" value="PRK13339.1"/>
    <property type="match status" value="1"/>
</dbReference>
<dbReference type="PANTHER" id="PTHR43104">
    <property type="entry name" value="L-2-HYDROXYGLUTARATE DEHYDROGENASE, MITOCHONDRIAL"/>
    <property type="match status" value="1"/>
</dbReference>
<dbReference type="PANTHER" id="PTHR43104:SF2">
    <property type="entry name" value="L-2-HYDROXYGLUTARATE DEHYDROGENASE, MITOCHONDRIAL"/>
    <property type="match status" value="1"/>
</dbReference>
<dbReference type="Pfam" id="PF06039">
    <property type="entry name" value="Mqo"/>
    <property type="match status" value="1"/>
</dbReference>
<dbReference type="SUPFAM" id="SSF51905">
    <property type="entry name" value="FAD/NAD(P)-binding domain"/>
    <property type="match status" value="1"/>
</dbReference>
<evidence type="ECO:0000255" key="1">
    <source>
        <dbReference type="HAMAP-Rule" id="MF_00212"/>
    </source>
</evidence>
<feature type="chain" id="PRO_1000099871" description="Probable malate:quinone oxidoreductase">
    <location>
        <begin position="1"/>
        <end position="548"/>
    </location>
</feature>
<protein>
    <recommendedName>
        <fullName evidence="1">Probable malate:quinone oxidoreductase</fullName>
        <ecNumber evidence="1">1.1.5.4</ecNumber>
    </recommendedName>
    <alternativeName>
        <fullName evidence="1">MQO</fullName>
    </alternativeName>
    <alternativeName>
        <fullName evidence="1">Malate dehydrogenase [quinone]</fullName>
    </alternativeName>
</protein>
<keyword id="KW-0274">FAD</keyword>
<keyword id="KW-0285">Flavoprotein</keyword>
<keyword id="KW-0560">Oxidoreductase</keyword>
<keyword id="KW-0816">Tricarboxylic acid cycle</keyword>
<organism>
    <name type="scientific">Escherichia coli (strain SE11)</name>
    <dbReference type="NCBI Taxonomy" id="409438"/>
    <lineage>
        <taxon>Bacteria</taxon>
        <taxon>Pseudomonadati</taxon>
        <taxon>Pseudomonadota</taxon>
        <taxon>Gammaproteobacteria</taxon>
        <taxon>Enterobacterales</taxon>
        <taxon>Enterobacteriaceae</taxon>
        <taxon>Escherichia</taxon>
    </lineage>
</organism>
<reference key="1">
    <citation type="journal article" date="2008" name="DNA Res.">
        <title>Complete genome sequence and comparative analysis of the wild-type commensal Escherichia coli strain SE11 isolated from a healthy adult.</title>
        <authorList>
            <person name="Oshima K."/>
            <person name="Toh H."/>
            <person name="Ogura Y."/>
            <person name="Sasamoto H."/>
            <person name="Morita H."/>
            <person name="Park S.-H."/>
            <person name="Ooka T."/>
            <person name="Iyoda S."/>
            <person name="Taylor T.D."/>
            <person name="Hayashi T."/>
            <person name="Itoh K."/>
            <person name="Hattori M."/>
        </authorList>
    </citation>
    <scope>NUCLEOTIDE SEQUENCE [LARGE SCALE GENOMIC DNA]</scope>
    <source>
        <strain>SE11</strain>
    </source>
</reference>
<proteinExistence type="inferred from homology"/>